<feature type="chain" id="PRO_0000175218" description="Ferrochelatase">
    <location>
        <begin position="1"/>
        <end position="387"/>
    </location>
</feature>
<feature type="region of interest" description="Ferrochelatase" evidence="4">
    <location>
        <begin position="1"/>
        <end position="318"/>
    </location>
</feature>
<feature type="region of interest" description="Hlip domain" evidence="4">
    <location>
        <begin position="319"/>
        <end position="387"/>
    </location>
</feature>
<feature type="binding site" evidence="1">
    <location>
        <position position="196"/>
    </location>
    <ligand>
        <name>Fe cation</name>
        <dbReference type="ChEBI" id="CHEBI:24875"/>
    </ligand>
</feature>
<feature type="binding site" evidence="1">
    <location>
        <position position="277"/>
    </location>
    <ligand>
        <name>Fe cation</name>
        <dbReference type="ChEBI" id="CHEBI:24875"/>
    </ligand>
</feature>
<comment type="function">
    <text evidence="1">Catalyzes the ferrous insertion into protoporphyrin IX.</text>
</comment>
<comment type="function">
    <text evidence="6 7">The Hlip proteins might regulate tetrapyrrole biosynthesis, maybe at the level of aminolevulinic acid synthesis (Probable) (PubMed:22090028). Deletion of 4 to 5 members of the Hlip family (always including this member) suggests the proteins are involved in regulation of chlorophyll biosynthesis, in stabilization of chlorophyll-binding proteins and/or in reuse of chlorophylls, and may regulate tetrapyrrole biosynthesis (Probable) (PubMed:15107425). The Hlip proteins probably stabilize PSII assembly intermediates (Probable) (PubMed:22090028).</text>
</comment>
<comment type="catalytic activity">
    <reaction evidence="1">
        <text>heme b + 2 H(+) = protoporphyrin IX + Fe(2+)</text>
        <dbReference type="Rhea" id="RHEA:22584"/>
        <dbReference type="ChEBI" id="CHEBI:15378"/>
        <dbReference type="ChEBI" id="CHEBI:29033"/>
        <dbReference type="ChEBI" id="CHEBI:57306"/>
        <dbReference type="ChEBI" id="CHEBI:60344"/>
        <dbReference type="EC" id="4.98.1.1"/>
    </reaction>
</comment>
<comment type="pathway">
    <text evidence="1">Porphyrin-containing compound metabolism; protoheme biosynthesis; protoheme from protoporphyrin-IX: step 1/1.</text>
</comment>
<comment type="subcellular location">
    <subcellularLocation>
        <location evidence="1">Cytoplasm</location>
    </subcellularLocation>
</comment>
<comment type="induction">
    <text evidence="2">Constitutively transcribed under all tested conditions, probably a monocistronic operon.</text>
</comment>
<comment type="disruption phenotype">
    <text evidence="2 3">Increased light tolerance in a strain missing photosystem I (PSI); may decrease chlorophyll synthesis. This mutant has an insertion between the ferrochelatase and Hli domain which is expected to allow ferrochelatase to be functional (PubMed:10413515). In a quintuple hliA-hliB-hliC-hliD-hemH deletion chlorophyll half-life decreases 2-fold while the half-life of PSII proteins does not change; photosystem II assembly intermediate RC47(1) (PSII monomer without CP43) is missing. De novo chlorophyll synthesis is very slow (PubMed:22090028).</text>
</comment>
<comment type="similarity">
    <text evidence="1">In the N-terminal section; belongs to the ferrochelatase family.</text>
</comment>
<comment type="similarity">
    <text evidence="5">In the C-terminal section; belongs to the Hlip family.</text>
</comment>
<dbReference type="EC" id="4.98.1.1" evidence="1"/>
<dbReference type="EMBL" id="BA000022">
    <property type="protein sequence ID" value="BAA10523.1"/>
    <property type="molecule type" value="Genomic_DNA"/>
</dbReference>
<dbReference type="PIR" id="S75788">
    <property type="entry name" value="S75788"/>
</dbReference>
<dbReference type="SMR" id="P54225"/>
<dbReference type="FunCoup" id="P54225">
    <property type="interactions" value="425"/>
</dbReference>
<dbReference type="IntAct" id="P54225">
    <property type="interactions" value="5"/>
</dbReference>
<dbReference type="STRING" id="1148.gene:10500027"/>
<dbReference type="PaxDb" id="1148-1001277"/>
<dbReference type="EnsemblBacteria" id="BAA10523">
    <property type="protein sequence ID" value="BAA10523"/>
    <property type="gene ID" value="BAA10523"/>
</dbReference>
<dbReference type="KEGG" id="syn:slr0839"/>
<dbReference type="eggNOG" id="COG0276">
    <property type="taxonomic scope" value="Bacteria"/>
</dbReference>
<dbReference type="InParanoid" id="P54225"/>
<dbReference type="PhylomeDB" id="P54225"/>
<dbReference type="BRENDA" id="4.99.1.1">
    <property type="organism ID" value="382"/>
</dbReference>
<dbReference type="UniPathway" id="UPA00252">
    <property type="reaction ID" value="UER00325"/>
</dbReference>
<dbReference type="Proteomes" id="UP000001425">
    <property type="component" value="Chromosome"/>
</dbReference>
<dbReference type="GO" id="GO:0005737">
    <property type="term" value="C:cytoplasm"/>
    <property type="evidence" value="ECO:0007669"/>
    <property type="project" value="UniProtKB-SubCell"/>
</dbReference>
<dbReference type="GO" id="GO:0004325">
    <property type="term" value="F:ferrochelatase activity"/>
    <property type="evidence" value="ECO:0007669"/>
    <property type="project" value="UniProtKB-UniRule"/>
</dbReference>
<dbReference type="GO" id="GO:0046872">
    <property type="term" value="F:metal ion binding"/>
    <property type="evidence" value="ECO:0007669"/>
    <property type="project" value="UniProtKB-KW"/>
</dbReference>
<dbReference type="GO" id="GO:0006783">
    <property type="term" value="P:heme biosynthetic process"/>
    <property type="evidence" value="ECO:0007669"/>
    <property type="project" value="UniProtKB-UniRule"/>
</dbReference>
<dbReference type="CDD" id="cd00419">
    <property type="entry name" value="Ferrochelatase_C"/>
    <property type="match status" value="1"/>
</dbReference>
<dbReference type="CDD" id="cd03411">
    <property type="entry name" value="Ferrochelatase_N"/>
    <property type="match status" value="1"/>
</dbReference>
<dbReference type="FunFam" id="3.40.50.1400:FF:000006">
    <property type="entry name" value="Ferrochelatase"/>
    <property type="match status" value="1"/>
</dbReference>
<dbReference type="Gene3D" id="3.40.50.1400">
    <property type="match status" value="2"/>
</dbReference>
<dbReference type="HAMAP" id="MF_00323">
    <property type="entry name" value="Ferrochelatase"/>
    <property type="match status" value="1"/>
</dbReference>
<dbReference type="InterPro" id="IPR001015">
    <property type="entry name" value="Ferrochelatase"/>
</dbReference>
<dbReference type="InterPro" id="IPR019772">
    <property type="entry name" value="Ferrochelatase_AS"/>
</dbReference>
<dbReference type="InterPro" id="IPR033644">
    <property type="entry name" value="Ferrochelatase_C"/>
</dbReference>
<dbReference type="InterPro" id="IPR033659">
    <property type="entry name" value="Ferrochelatase_N"/>
</dbReference>
<dbReference type="NCBIfam" id="TIGR00109">
    <property type="entry name" value="hemH"/>
    <property type="match status" value="1"/>
</dbReference>
<dbReference type="PANTHER" id="PTHR11108">
    <property type="entry name" value="FERROCHELATASE"/>
    <property type="match status" value="1"/>
</dbReference>
<dbReference type="PANTHER" id="PTHR11108:SF1">
    <property type="entry name" value="FERROCHELATASE, MITOCHONDRIAL"/>
    <property type="match status" value="1"/>
</dbReference>
<dbReference type="Pfam" id="PF00762">
    <property type="entry name" value="Ferrochelatase"/>
    <property type="match status" value="1"/>
</dbReference>
<dbReference type="SUPFAM" id="SSF53800">
    <property type="entry name" value="Chelatase"/>
    <property type="match status" value="1"/>
</dbReference>
<dbReference type="SUPFAM" id="SSF103511">
    <property type="entry name" value="Chlorophyll a-b binding protein"/>
    <property type="match status" value="1"/>
</dbReference>
<dbReference type="PROSITE" id="PS00534">
    <property type="entry name" value="FERROCHELATASE"/>
    <property type="match status" value="1"/>
</dbReference>
<proteinExistence type="evidence at protein level"/>
<sequence length="387" mass="43924">MGRVGVLLLNLGGPEKLEDVRPFLFNLFADPEIIRLPFPWLQKPLAWLISTLRAKKSQANYAEIGGGSPLLQITEAQASALTTRLERLGQDAKVYIGMRYWHPFTEEAVEKIKGDRLQRLVILPLYPHFSISTSGSSFRVLEEMWHNDPSLRQLDYSLIPSWYDHPGYLQAMADLIAQELKKFPNPDQAHIFFSAHGVPQSYVDEAGDPYQAEIEACTRLIMRTLDRPNQYTLAYQSRVGPVEWLKPYTEEALQKLGAEGIDDLLVVPISFVSEHIETLQEIDIEYREIAEEAGIDNFQRVPALNTHPVFIDALAQMVMDSLNDPPCTFETVPHPKKNMKMYPQERWEWGLTTAAEVWNGRLAMLGFIALLVELISGQGPLHFVGLL</sequence>
<evidence type="ECO:0000255" key="1">
    <source>
        <dbReference type="HAMAP-Rule" id="MF_00323"/>
    </source>
</evidence>
<evidence type="ECO:0000269" key="2">
    <source>
    </source>
</evidence>
<evidence type="ECO:0000269" key="3">
    <source>
    </source>
</evidence>
<evidence type="ECO:0000303" key="4">
    <source>
    </source>
</evidence>
<evidence type="ECO:0000305" key="5">
    <source>
    </source>
</evidence>
<evidence type="ECO:0000305" key="6">
    <source>
    </source>
</evidence>
<evidence type="ECO:0000305" key="7">
    <source>
    </source>
</evidence>
<protein>
    <recommendedName>
        <fullName evidence="1">Ferrochelatase</fullName>
        <ecNumber evidence="1">4.98.1.1</ecNumber>
    </recommendedName>
    <alternativeName>
        <fullName evidence="1">Heme synthase</fullName>
    </alternativeName>
    <alternativeName>
        <fullName evidence="1">Protoheme ferro-lyase</fullName>
    </alternativeName>
    <alternativeName>
        <fullName evidence="4">Small Cab-like protein ScpA</fullName>
    </alternativeName>
</protein>
<name>HEMH_SYNY3</name>
<gene>
    <name evidence="1" type="primary">hemH</name>
    <name evidence="4" type="synonym">scpA</name>
    <name type="ordered locus">slr0839</name>
</gene>
<accession>P54225</accession>
<keyword id="KW-0963">Cytoplasm</keyword>
<keyword id="KW-0350">Heme biosynthesis</keyword>
<keyword id="KW-0408">Iron</keyword>
<keyword id="KW-0456">Lyase</keyword>
<keyword id="KW-0479">Metal-binding</keyword>
<keyword id="KW-0627">Porphyrin biosynthesis</keyword>
<keyword id="KW-1185">Reference proteome</keyword>
<organism>
    <name type="scientific">Synechocystis sp. (strain ATCC 27184 / PCC 6803 / Kazusa)</name>
    <dbReference type="NCBI Taxonomy" id="1111708"/>
    <lineage>
        <taxon>Bacteria</taxon>
        <taxon>Bacillati</taxon>
        <taxon>Cyanobacteriota</taxon>
        <taxon>Cyanophyceae</taxon>
        <taxon>Synechococcales</taxon>
        <taxon>Merismopediaceae</taxon>
        <taxon>Synechocystis</taxon>
    </lineage>
</organism>
<reference key="1">
    <citation type="journal article" date="1995" name="DNA Res.">
        <title>Sequence analysis of the genome of the unicellular cyanobacterium Synechocystis sp. strain PCC6803. I. Sequence features in the 1 Mb region from map positions 64% to 92% of the genome.</title>
        <authorList>
            <person name="Kaneko T."/>
            <person name="Tanaka A."/>
            <person name="Sato S."/>
            <person name="Kotani H."/>
            <person name="Sazuka T."/>
            <person name="Miyajima N."/>
            <person name="Sugiura M."/>
            <person name="Tabata S."/>
        </authorList>
    </citation>
    <scope>NUCLEOTIDE SEQUENCE [LARGE SCALE GENOMIC DNA]</scope>
    <source>
        <strain>ATCC 27184 / PCC 6803 / N-1</strain>
    </source>
</reference>
<reference key="2">
    <citation type="journal article" date="1996" name="DNA Res.">
        <title>Sequence analysis of the genome of the unicellular cyanobacterium Synechocystis sp. strain PCC6803. II. Sequence determination of the entire genome and assignment of potential protein-coding regions.</title>
        <authorList>
            <person name="Kaneko T."/>
            <person name="Sato S."/>
            <person name="Kotani H."/>
            <person name="Tanaka A."/>
            <person name="Asamizu E."/>
            <person name="Nakamura Y."/>
            <person name="Miyajima N."/>
            <person name="Hirosawa M."/>
            <person name="Sugiura M."/>
            <person name="Sasamoto S."/>
            <person name="Kimura T."/>
            <person name="Hosouchi T."/>
            <person name="Matsuno A."/>
            <person name="Muraki A."/>
            <person name="Nakazaki N."/>
            <person name="Naruo K."/>
            <person name="Okumura S."/>
            <person name="Shimpo S."/>
            <person name="Takeuchi C."/>
            <person name="Wada T."/>
            <person name="Watanabe A."/>
            <person name="Yamada M."/>
            <person name="Yasuda M."/>
            <person name="Tabata S."/>
        </authorList>
    </citation>
    <scope>NUCLEOTIDE SEQUENCE [LARGE SCALE GENOMIC DNA]</scope>
    <source>
        <strain>ATCC 27184 / PCC 6803 / Kazusa</strain>
    </source>
</reference>
<reference key="3">
    <citation type="journal article" date="1999" name="Biochemistry">
        <title>A cyanobacterial gene family coding for single-helix proteins resembling part of the light-harvesting proteins from higher plants.</title>
        <authorList>
            <person name="Funk C."/>
            <person name="Vermaas W."/>
        </authorList>
    </citation>
    <scope>INDUCTION</scope>
    <scope>DISRUPTION PHENOTYPE</scope>
    <source>
        <strain>ATCC 27184 / PCC 6803 / Kazusa</strain>
    </source>
</reference>
<reference key="4">
    <citation type="journal article" date="2004" name="J. Biol. Chem.">
        <title>Multiple deletions of small Cab-like proteins in the cyanobacterium Synechocystis sp. PCC 6803: consequences for pigment biosynthesis and accumulation.</title>
        <authorList>
            <person name="Xu H."/>
            <person name="Vavilin D."/>
            <person name="Funk C."/>
            <person name="Vermaas W."/>
        </authorList>
    </citation>
    <scope>FUNCTION</scope>
    <source>
        <strain>ATCC 27184 / PCC 6803 / Kazusa</strain>
    </source>
</reference>
<reference key="5">
    <citation type="journal article" date="2012" name="J. Biol. Chem.">
        <title>Photosystem II component lifetimes in the cyanobacterium Synechocystis sp. strain PCC 6803: small Cab-like proteins stabilize biosynthesis intermediates and affect early steps in chlorophyll synthesis.</title>
        <authorList>
            <person name="Yao D.C.I."/>
            <person name="Brune D.C."/>
            <person name="Vavilin D."/>
            <person name="Vermaas W.F.J."/>
        </authorList>
    </citation>
    <scope>POSSIBLE FUNCTION IN AMINOLEVULINIC ACID SYNTHESIS</scope>
    <scope>POSSIBLE FUNCTION IN PSII ASSEMBLY</scope>
    <scope>DISRUPTION PHENOTYPE</scope>
    <source>
        <strain>ATCC 27184 / PCC 6803 / Kazusa</strain>
    </source>
</reference>